<proteinExistence type="inferred from homology"/>
<gene>
    <name type="primary">msrA</name>
    <name type="ordered locus">DR_1849</name>
</gene>
<evidence type="ECO:0000250" key="1"/>
<evidence type="ECO:0000256" key="2">
    <source>
        <dbReference type="SAM" id="MobiDB-lite"/>
    </source>
</evidence>
<evidence type="ECO:0000305" key="3"/>
<sequence length="206" mass="22747">MGWHPLGEHGAPHNSSMTQQTNSQGTQPGAAQEQAIFAGGCFWCTEAVMQDLRGVQKVESGYIGGTVPNPDYRSVCGGQTGHAEAVRVTFDPNQISYRDLLGLFFATHDPTSLNRQGADVGTQYRSALFPLTQEQEQTAREMIEQLGTEDVFGRPIVTSIEPASTFYVAEDYHQNYYKNNPGQGYCMAVISPKVAKLRQYYGDKLR</sequence>
<accession>Q9RTB6</accession>
<reference key="1">
    <citation type="journal article" date="1999" name="Science">
        <title>Genome sequence of the radioresistant bacterium Deinococcus radiodurans R1.</title>
        <authorList>
            <person name="White O."/>
            <person name="Eisen J.A."/>
            <person name="Heidelberg J.F."/>
            <person name="Hickey E.K."/>
            <person name="Peterson J.D."/>
            <person name="Dodson R.J."/>
            <person name="Haft D.H."/>
            <person name="Gwinn M.L."/>
            <person name="Nelson W.C."/>
            <person name="Richardson D.L."/>
            <person name="Moffat K.S."/>
            <person name="Qin H."/>
            <person name="Jiang L."/>
            <person name="Pamphile W."/>
            <person name="Crosby M."/>
            <person name="Shen M."/>
            <person name="Vamathevan J.J."/>
            <person name="Lam P."/>
            <person name="McDonald L.A."/>
            <person name="Utterback T.R."/>
            <person name="Zalewski C."/>
            <person name="Makarova K.S."/>
            <person name="Aravind L."/>
            <person name="Daly M.J."/>
            <person name="Minton K.W."/>
            <person name="Fleischmann R.D."/>
            <person name="Ketchum K.A."/>
            <person name="Nelson K.E."/>
            <person name="Salzberg S.L."/>
            <person name="Smith H.O."/>
            <person name="Venter J.C."/>
            <person name="Fraser C.M."/>
        </authorList>
    </citation>
    <scope>NUCLEOTIDE SEQUENCE [LARGE SCALE GENOMIC DNA]</scope>
    <source>
        <strain>ATCC 13939 / DSM 20539 / JCM 16871 / CCUG 27074 / LMG 4051 / NBRC 15346 / NCIMB 9279 / VKM B-1422 / R1</strain>
    </source>
</reference>
<keyword id="KW-0560">Oxidoreductase</keyword>
<keyword id="KW-1185">Reference proteome</keyword>
<dbReference type="EC" id="1.8.4.11"/>
<dbReference type="EMBL" id="AE000513">
    <property type="protein sequence ID" value="AAF11403.1"/>
    <property type="molecule type" value="Genomic_DNA"/>
</dbReference>
<dbReference type="PIR" id="E75345">
    <property type="entry name" value="E75345"/>
</dbReference>
<dbReference type="RefSeq" id="NP_295572.1">
    <property type="nucleotide sequence ID" value="NC_001263.1"/>
</dbReference>
<dbReference type="SMR" id="Q9RTB6"/>
<dbReference type="FunCoup" id="Q9RTB6">
    <property type="interactions" value="370"/>
</dbReference>
<dbReference type="STRING" id="243230.DR_1849"/>
<dbReference type="PaxDb" id="243230-DR_1849"/>
<dbReference type="EnsemblBacteria" id="AAF11403">
    <property type="protein sequence ID" value="AAF11403"/>
    <property type="gene ID" value="DR_1849"/>
</dbReference>
<dbReference type="KEGG" id="dra:DR_1849"/>
<dbReference type="PATRIC" id="fig|243230.17.peg.2062"/>
<dbReference type="eggNOG" id="COG0225">
    <property type="taxonomic scope" value="Bacteria"/>
</dbReference>
<dbReference type="HOGENOM" id="CLU_031040_10_0_0"/>
<dbReference type="InParanoid" id="Q9RTB6"/>
<dbReference type="OrthoDB" id="4174719at2"/>
<dbReference type="Proteomes" id="UP000002524">
    <property type="component" value="Chromosome 1"/>
</dbReference>
<dbReference type="GO" id="GO:0033744">
    <property type="term" value="F:L-methionine:thioredoxin-disulfide S-oxidoreductase activity"/>
    <property type="evidence" value="ECO:0007669"/>
    <property type="project" value="RHEA"/>
</dbReference>
<dbReference type="GO" id="GO:0008113">
    <property type="term" value="F:peptide-methionine (S)-S-oxide reductase activity"/>
    <property type="evidence" value="ECO:0007669"/>
    <property type="project" value="UniProtKB-UniRule"/>
</dbReference>
<dbReference type="GO" id="GO:0036211">
    <property type="term" value="P:protein modification process"/>
    <property type="evidence" value="ECO:0007669"/>
    <property type="project" value="UniProtKB-UniRule"/>
</dbReference>
<dbReference type="Gene3D" id="3.30.1060.10">
    <property type="entry name" value="Peptide methionine sulphoxide reductase MsrA"/>
    <property type="match status" value="1"/>
</dbReference>
<dbReference type="HAMAP" id="MF_01401">
    <property type="entry name" value="MsrA"/>
    <property type="match status" value="1"/>
</dbReference>
<dbReference type="InterPro" id="IPR002569">
    <property type="entry name" value="Met_Sox_Rdtase_MsrA_dom"/>
</dbReference>
<dbReference type="InterPro" id="IPR036509">
    <property type="entry name" value="Met_Sox_Rdtase_MsrA_sf"/>
</dbReference>
<dbReference type="NCBIfam" id="TIGR00401">
    <property type="entry name" value="msrA"/>
    <property type="match status" value="1"/>
</dbReference>
<dbReference type="PANTHER" id="PTHR43774">
    <property type="entry name" value="PEPTIDE METHIONINE SULFOXIDE REDUCTASE"/>
    <property type="match status" value="1"/>
</dbReference>
<dbReference type="PANTHER" id="PTHR43774:SF1">
    <property type="entry name" value="PEPTIDE METHIONINE SULFOXIDE REDUCTASE MSRA 2"/>
    <property type="match status" value="1"/>
</dbReference>
<dbReference type="Pfam" id="PF01625">
    <property type="entry name" value="PMSR"/>
    <property type="match status" value="1"/>
</dbReference>
<dbReference type="SUPFAM" id="SSF55068">
    <property type="entry name" value="Peptide methionine sulfoxide reductase"/>
    <property type="match status" value="1"/>
</dbReference>
<name>MSRA_DEIRA</name>
<organism>
    <name type="scientific">Deinococcus radiodurans (strain ATCC 13939 / DSM 20539 / JCM 16871 / CCUG 27074 / LMG 4051 / NBRC 15346 / NCIMB 9279 / VKM B-1422 / R1)</name>
    <dbReference type="NCBI Taxonomy" id="243230"/>
    <lineage>
        <taxon>Bacteria</taxon>
        <taxon>Thermotogati</taxon>
        <taxon>Deinococcota</taxon>
        <taxon>Deinococci</taxon>
        <taxon>Deinococcales</taxon>
        <taxon>Deinococcaceae</taxon>
        <taxon>Deinococcus</taxon>
    </lineage>
</organism>
<protein>
    <recommendedName>
        <fullName>Peptide methionine sulfoxide reductase MsrA</fullName>
        <shortName>Protein-methionine-S-oxide reductase</shortName>
        <ecNumber>1.8.4.11</ecNumber>
    </recommendedName>
    <alternativeName>
        <fullName>Peptide-methionine (S)-S-oxide reductase</fullName>
        <shortName>Peptide Met(O) reductase</shortName>
    </alternativeName>
</protein>
<comment type="function">
    <text evidence="1">Has an important function as a repair enzyme for proteins that have been inactivated by oxidation. Catalyzes the reversible oxidation-reduction of methionine sulfoxide in proteins to methionine (By similarity).</text>
</comment>
<comment type="catalytic activity">
    <reaction>
        <text>L-methionyl-[protein] + [thioredoxin]-disulfide + H2O = L-methionyl-(S)-S-oxide-[protein] + [thioredoxin]-dithiol</text>
        <dbReference type="Rhea" id="RHEA:14217"/>
        <dbReference type="Rhea" id="RHEA-COMP:10698"/>
        <dbReference type="Rhea" id="RHEA-COMP:10700"/>
        <dbReference type="Rhea" id="RHEA-COMP:12313"/>
        <dbReference type="Rhea" id="RHEA-COMP:12315"/>
        <dbReference type="ChEBI" id="CHEBI:15377"/>
        <dbReference type="ChEBI" id="CHEBI:16044"/>
        <dbReference type="ChEBI" id="CHEBI:29950"/>
        <dbReference type="ChEBI" id="CHEBI:44120"/>
        <dbReference type="ChEBI" id="CHEBI:50058"/>
        <dbReference type="EC" id="1.8.4.11"/>
    </reaction>
</comment>
<comment type="catalytic activity">
    <reaction>
        <text>[thioredoxin]-disulfide + L-methionine + H2O = L-methionine (S)-S-oxide + [thioredoxin]-dithiol</text>
        <dbReference type="Rhea" id="RHEA:19993"/>
        <dbReference type="Rhea" id="RHEA-COMP:10698"/>
        <dbReference type="Rhea" id="RHEA-COMP:10700"/>
        <dbReference type="ChEBI" id="CHEBI:15377"/>
        <dbReference type="ChEBI" id="CHEBI:29950"/>
        <dbReference type="ChEBI" id="CHEBI:50058"/>
        <dbReference type="ChEBI" id="CHEBI:57844"/>
        <dbReference type="ChEBI" id="CHEBI:58772"/>
        <dbReference type="EC" id="1.8.4.11"/>
    </reaction>
</comment>
<comment type="similarity">
    <text evidence="3">Belongs to the MsrA Met sulfoxide reductase family.</text>
</comment>
<feature type="chain" id="PRO_0000138545" description="Peptide methionine sulfoxide reductase MsrA">
    <location>
        <begin position="1"/>
        <end position="206"/>
    </location>
</feature>
<feature type="region of interest" description="Disordered" evidence="2">
    <location>
        <begin position="1"/>
        <end position="30"/>
    </location>
</feature>
<feature type="compositionally biased region" description="Basic and acidic residues" evidence="2">
    <location>
        <begin position="1"/>
        <end position="11"/>
    </location>
</feature>
<feature type="compositionally biased region" description="Polar residues" evidence="2">
    <location>
        <begin position="13"/>
        <end position="29"/>
    </location>
</feature>
<feature type="active site" evidence="1">
    <location>
        <position position="41"/>
    </location>
</feature>